<dbReference type="EC" id="3.4.23.36" evidence="1"/>
<dbReference type="EMBL" id="CP000606">
    <property type="protein sequence ID" value="ABO22971.1"/>
    <property type="molecule type" value="Genomic_DNA"/>
</dbReference>
<dbReference type="RefSeq" id="WP_011864904.1">
    <property type="nucleotide sequence ID" value="NC_009092.1"/>
</dbReference>
<dbReference type="SMR" id="A3QBX3"/>
<dbReference type="STRING" id="323850.Shew_1100"/>
<dbReference type="MEROPS" id="A08.001"/>
<dbReference type="KEGG" id="slo:Shew_1100"/>
<dbReference type="eggNOG" id="COG0597">
    <property type="taxonomic scope" value="Bacteria"/>
</dbReference>
<dbReference type="HOGENOM" id="CLU_083252_4_0_6"/>
<dbReference type="OrthoDB" id="9810259at2"/>
<dbReference type="UniPathway" id="UPA00665"/>
<dbReference type="Proteomes" id="UP000001558">
    <property type="component" value="Chromosome"/>
</dbReference>
<dbReference type="GO" id="GO:0005886">
    <property type="term" value="C:plasma membrane"/>
    <property type="evidence" value="ECO:0007669"/>
    <property type="project" value="UniProtKB-SubCell"/>
</dbReference>
<dbReference type="GO" id="GO:0004190">
    <property type="term" value="F:aspartic-type endopeptidase activity"/>
    <property type="evidence" value="ECO:0007669"/>
    <property type="project" value="UniProtKB-UniRule"/>
</dbReference>
<dbReference type="GO" id="GO:0006508">
    <property type="term" value="P:proteolysis"/>
    <property type="evidence" value="ECO:0007669"/>
    <property type="project" value="UniProtKB-KW"/>
</dbReference>
<dbReference type="HAMAP" id="MF_00161">
    <property type="entry name" value="LspA"/>
    <property type="match status" value="1"/>
</dbReference>
<dbReference type="InterPro" id="IPR001872">
    <property type="entry name" value="Peptidase_A8"/>
</dbReference>
<dbReference type="NCBIfam" id="TIGR00077">
    <property type="entry name" value="lspA"/>
    <property type="match status" value="1"/>
</dbReference>
<dbReference type="PANTHER" id="PTHR33695">
    <property type="entry name" value="LIPOPROTEIN SIGNAL PEPTIDASE"/>
    <property type="match status" value="1"/>
</dbReference>
<dbReference type="PANTHER" id="PTHR33695:SF1">
    <property type="entry name" value="LIPOPROTEIN SIGNAL PEPTIDASE"/>
    <property type="match status" value="1"/>
</dbReference>
<dbReference type="Pfam" id="PF01252">
    <property type="entry name" value="Peptidase_A8"/>
    <property type="match status" value="1"/>
</dbReference>
<dbReference type="PRINTS" id="PR00781">
    <property type="entry name" value="LIPOSIGPTASE"/>
</dbReference>
<dbReference type="PROSITE" id="PS00855">
    <property type="entry name" value="SPASE_II"/>
    <property type="match status" value="1"/>
</dbReference>
<proteinExistence type="inferred from homology"/>
<organism>
    <name type="scientific">Shewanella loihica (strain ATCC BAA-1088 / PV-4)</name>
    <dbReference type="NCBI Taxonomy" id="323850"/>
    <lineage>
        <taxon>Bacteria</taxon>
        <taxon>Pseudomonadati</taxon>
        <taxon>Pseudomonadota</taxon>
        <taxon>Gammaproteobacteria</taxon>
        <taxon>Alteromonadales</taxon>
        <taxon>Shewanellaceae</taxon>
        <taxon>Shewanella</taxon>
    </lineage>
</organism>
<name>LSPA_SHELP</name>
<evidence type="ECO:0000255" key="1">
    <source>
        <dbReference type="HAMAP-Rule" id="MF_00161"/>
    </source>
</evidence>
<accession>A3QBX3</accession>
<keyword id="KW-0064">Aspartyl protease</keyword>
<keyword id="KW-0997">Cell inner membrane</keyword>
<keyword id="KW-1003">Cell membrane</keyword>
<keyword id="KW-0378">Hydrolase</keyword>
<keyword id="KW-0472">Membrane</keyword>
<keyword id="KW-0645">Protease</keyword>
<keyword id="KW-1185">Reference proteome</keyword>
<keyword id="KW-0812">Transmembrane</keyword>
<keyword id="KW-1133">Transmembrane helix</keyword>
<comment type="function">
    <text evidence="1">This protein specifically catalyzes the removal of signal peptides from prolipoproteins.</text>
</comment>
<comment type="catalytic activity">
    <reaction evidence="1">
        <text>Release of signal peptides from bacterial membrane prolipoproteins. Hydrolyzes -Xaa-Yaa-Zaa-|-(S,diacylglyceryl)Cys-, in which Xaa is hydrophobic (preferably Leu), and Yaa (Ala or Ser) and Zaa (Gly or Ala) have small, neutral side chains.</text>
        <dbReference type="EC" id="3.4.23.36"/>
    </reaction>
</comment>
<comment type="pathway">
    <text evidence="1">Protein modification; lipoprotein biosynthesis (signal peptide cleavage).</text>
</comment>
<comment type="subcellular location">
    <subcellularLocation>
        <location evidence="1">Cell inner membrane</location>
        <topology evidence="1">Multi-pass membrane protein</topology>
    </subcellularLocation>
</comment>
<comment type="similarity">
    <text evidence="1">Belongs to the peptidase A8 family.</text>
</comment>
<gene>
    <name evidence="1" type="primary">lspA</name>
    <name type="ordered locus">Shew_1100</name>
</gene>
<sequence length="170" mass="19360">MPSSWKESGLRWYWVVVLVFVADQLSKQWVLANFDLRESINLLPFFNFTYVRNYGAAFSFLNDAGGWQRWLFTLVAVGFSTLLTVWLRKQPKGLWRLNLAYTLVIGGALGNLIDRLQHGFVVDFLDFYWKTSHFPAFNIADSAICVGAGLIILDSFISERKPNGEDVAKG</sequence>
<feature type="chain" id="PRO_1000038824" description="Lipoprotein signal peptidase">
    <location>
        <begin position="1"/>
        <end position="170"/>
    </location>
</feature>
<feature type="transmembrane region" description="Helical" evidence="1">
    <location>
        <begin position="12"/>
        <end position="32"/>
    </location>
</feature>
<feature type="transmembrane region" description="Helical" evidence="1">
    <location>
        <begin position="67"/>
        <end position="87"/>
    </location>
</feature>
<feature type="transmembrane region" description="Helical" evidence="1">
    <location>
        <begin position="93"/>
        <end position="113"/>
    </location>
</feature>
<feature type="transmembrane region" description="Helical" evidence="1">
    <location>
        <begin position="133"/>
        <end position="153"/>
    </location>
</feature>
<feature type="active site" evidence="1">
    <location>
        <position position="123"/>
    </location>
</feature>
<feature type="active site" evidence="1">
    <location>
        <position position="141"/>
    </location>
</feature>
<reference key="1">
    <citation type="submission" date="2007-03" db="EMBL/GenBank/DDBJ databases">
        <title>Complete sequence of Shewanella loihica PV-4.</title>
        <authorList>
            <consortium name="US DOE Joint Genome Institute"/>
            <person name="Copeland A."/>
            <person name="Lucas S."/>
            <person name="Lapidus A."/>
            <person name="Barry K."/>
            <person name="Detter J.C."/>
            <person name="Glavina del Rio T."/>
            <person name="Hammon N."/>
            <person name="Israni S."/>
            <person name="Dalin E."/>
            <person name="Tice H."/>
            <person name="Pitluck S."/>
            <person name="Chain P."/>
            <person name="Malfatti S."/>
            <person name="Shin M."/>
            <person name="Vergez L."/>
            <person name="Schmutz J."/>
            <person name="Larimer F."/>
            <person name="Land M."/>
            <person name="Hauser L."/>
            <person name="Kyrpides N."/>
            <person name="Mikhailova N."/>
            <person name="Romine M.F."/>
            <person name="Serres G."/>
            <person name="Fredrickson J."/>
            <person name="Tiedje J."/>
            <person name="Richardson P."/>
        </authorList>
    </citation>
    <scope>NUCLEOTIDE SEQUENCE [LARGE SCALE GENOMIC DNA]</scope>
    <source>
        <strain>ATCC BAA-1088 / PV-4</strain>
    </source>
</reference>
<protein>
    <recommendedName>
        <fullName evidence="1">Lipoprotein signal peptidase</fullName>
        <ecNumber evidence="1">3.4.23.36</ecNumber>
    </recommendedName>
    <alternativeName>
        <fullName evidence="1">Prolipoprotein signal peptidase</fullName>
    </alternativeName>
    <alternativeName>
        <fullName evidence="1">Signal peptidase II</fullName>
        <shortName evidence="1">SPase II</shortName>
    </alternativeName>
</protein>